<gene>
    <name evidence="4" type="primary">flvI</name>
    <name type="ORF">AFLA_135490</name>
    <name type="ORF">G4B84_005468</name>
</gene>
<name>FLVI_ASPFN</name>
<sequence length="1071" mass="119868">MAKDQSMSRTASLCQEITVPKTIPVCIQDVFYRRVLEQHDAPAVCAWDGELTYGELDDKSSSLARILAQKGIHRGSFVPLCFDRSLWTAVAMLAVLKAGGVFCFLEPKYPLARLEHMCRHINAKMVLSGESRSELARKLGEHLAVNEDLLATSPSDQELVDVAPNQAAYVAFTSGSTGKPKGILVSHQALVAGILYNDKPMYLNRTSRVLSFASFAFDVSFLEHFWALLVGGCMCIPSESDRENNLLEAIENLQVNWAFLTPSVARVLNPTKLPSLRHLIMGGEPITQTDIDMWSPHVHLIGVYGPAECAGCTTIQSDYGKVESAANIGFPYAVTCWIVDENNHNVLVPTGSIGELVVQGPSLSEGYVNDPEQSAKSYITNPLWLSGSKEAEQQLYKTGDLVRRLSDGSLHFISRKDTQVKINGQRIELGEVEHHTRAVLGGNREVIVEAVKAGRPSSSLVAFIVTDNIPQSSTELFLAPDAGFKDRINTTKSLLRERLPDYMVPETYISINHLPSTVTGKADRKRLREQFTLLTRAQIKAYFGLEDKVKVMPLTEIELKMQRLWAKVLNLDLHEIARDDDWVSLGGDSLGAMQLASLARSEQFFLTVPEIFRHKTISMLCQNIKTDVSETIEEMKPFALLCDHELESDRILQTIADQCQVSQNSIEDAYPITSLQLDASIIPIQWGLNYTLRLEFKLPPTVDPAQLTLAWEMTVASNPVLRTRIVELTKDHYIQAVIRSKIPLENLDSSNMARYEPAVDVWGIGKPLVRVGLQANRFVMLIHHAIYDGQSLPLVFRDISNAYQGQKLALIHFAPFVRWSKSLDAPKRQFWIDKFAGFDGRVFPPVLDPSLDPVESRELTGHLNIVHDAFTATNKIRVTLAIVISWHHGTNDVVFGGVFARRSAPIPDIIDSAVPTTAMLPDRIKLDPDETLRYNLERDQDNILSLMLHEGIDDRDIEQLSPECEAVACKYGTLLAVQPDLATAYPEMFRERDMQYYGPICALNALMQCYLSPESATISLRLSESTMDGVYHWGRFLDEFEAVFHFIQKNPDVKLCYLRRQLDIPNPRSPA</sequence>
<dbReference type="EC" id="6.2.1.-" evidence="3"/>
<dbReference type="EMBL" id="EQ963478">
    <property type="protein sequence ID" value="EED50786.1"/>
    <property type="molecule type" value="Genomic_DNA"/>
</dbReference>
<dbReference type="EMBL" id="CP059868">
    <property type="protein sequence ID" value="QMW30133.1"/>
    <property type="molecule type" value="Genomic_DNA"/>
</dbReference>
<dbReference type="RefSeq" id="XP_002379562.1">
    <property type="nucleotide sequence ID" value="XM_002379521.1"/>
</dbReference>
<dbReference type="SMR" id="B8NHE4"/>
<dbReference type="STRING" id="332952.B8NHE4"/>
<dbReference type="EnsemblFungi" id="EED50786">
    <property type="protein sequence ID" value="EED50786"/>
    <property type="gene ID" value="AFLA_135490"/>
</dbReference>
<dbReference type="VEuPathDB" id="FungiDB:AFLA_005903"/>
<dbReference type="eggNOG" id="KOG1178">
    <property type="taxonomic scope" value="Eukaryota"/>
</dbReference>
<dbReference type="HOGENOM" id="CLU_000022_60_3_1"/>
<dbReference type="OMA" id="CEAVACK"/>
<dbReference type="UniPathway" id="UPA00213"/>
<dbReference type="GO" id="GO:0005737">
    <property type="term" value="C:cytoplasm"/>
    <property type="evidence" value="ECO:0007669"/>
    <property type="project" value="TreeGrafter"/>
</dbReference>
<dbReference type="GO" id="GO:0016874">
    <property type="term" value="F:ligase activity"/>
    <property type="evidence" value="ECO:0007669"/>
    <property type="project" value="UniProtKB-KW"/>
</dbReference>
<dbReference type="GO" id="GO:0031177">
    <property type="term" value="F:phosphopantetheine binding"/>
    <property type="evidence" value="ECO:0007669"/>
    <property type="project" value="TreeGrafter"/>
</dbReference>
<dbReference type="GO" id="GO:0043041">
    <property type="term" value="P:amino acid activation for nonribosomal peptide biosynthetic process"/>
    <property type="evidence" value="ECO:0007669"/>
    <property type="project" value="TreeGrafter"/>
</dbReference>
<dbReference type="GO" id="GO:0044550">
    <property type="term" value="P:secondary metabolite biosynthetic process"/>
    <property type="evidence" value="ECO:0007669"/>
    <property type="project" value="TreeGrafter"/>
</dbReference>
<dbReference type="GO" id="GO:0016114">
    <property type="term" value="P:terpenoid biosynthetic process"/>
    <property type="evidence" value="ECO:0007669"/>
    <property type="project" value="UniProtKB-UniPathway"/>
</dbReference>
<dbReference type="CDD" id="cd05918">
    <property type="entry name" value="A_NRPS_SidN3_like"/>
    <property type="match status" value="1"/>
</dbReference>
<dbReference type="FunFam" id="3.30.300.30:FF:000015">
    <property type="entry name" value="Nonribosomal peptide synthase SidD"/>
    <property type="match status" value="1"/>
</dbReference>
<dbReference type="FunFam" id="3.40.50.12780:FF:000014">
    <property type="entry name" value="Nonribosomal peptide synthetase 1"/>
    <property type="match status" value="1"/>
</dbReference>
<dbReference type="Gene3D" id="3.30.300.30">
    <property type="match status" value="1"/>
</dbReference>
<dbReference type="Gene3D" id="1.10.1200.10">
    <property type="entry name" value="ACP-like"/>
    <property type="match status" value="1"/>
</dbReference>
<dbReference type="Gene3D" id="3.30.559.10">
    <property type="entry name" value="Chloramphenicol acetyltransferase-like domain"/>
    <property type="match status" value="1"/>
</dbReference>
<dbReference type="Gene3D" id="3.40.50.12780">
    <property type="entry name" value="N-terminal domain of ligase-like"/>
    <property type="match status" value="1"/>
</dbReference>
<dbReference type="Gene3D" id="3.30.559.30">
    <property type="entry name" value="Nonribosomal peptide synthetase, condensation domain"/>
    <property type="match status" value="1"/>
</dbReference>
<dbReference type="InterPro" id="IPR010071">
    <property type="entry name" value="AA_adenyl_dom"/>
</dbReference>
<dbReference type="InterPro" id="IPR036736">
    <property type="entry name" value="ACP-like_sf"/>
</dbReference>
<dbReference type="InterPro" id="IPR045851">
    <property type="entry name" value="AMP-bd_C_sf"/>
</dbReference>
<dbReference type="InterPro" id="IPR020845">
    <property type="entry name" value="AMP-binding_CS"/>
</dbReference>
<dbReference type="InterPro" id="IPR000873">
    <property type="entry name" value="AMP-dep_synth/lig_dom"/>
</dbReference>
<dbReference type="InterPro" id="IPR042099">
    <property type="entry name" value="ANL_N_sf"/>
</dbReference>
<dbReference type="InterPro" id="IPR023213">
    <property type="entry name" value="CAT-like_dom_sf"/>
</dbReference>
<dbReference type="InterPro" id="IPR001242">
    <property type="entry name" value="Condensatn"/>
</dbReference>
<dbReference type="InterPro" id="IPR009081">
    <property type="entry name" value="PP-bd_ACP"/>
</dbReference>
<dbReference type="InterPro" id="IPR006162">
    <property type="entry name" value="Ppantetheine_attach_site"/>
</dbReference>
<dbReference type="NCBIfam" id="TIGR01733">
    <property type="entry name" value="AA-adenyl-dom"/>
    <property type="match status" value="1"/>
</dbReference>
<dbReference type="PANTHER" id="PTHR45527:SF1">
    <property type="entry name" value="FATTY ACID SYNTHASE"/>
    <property type="match status" value="1"/>
</dbReference>
<dbReference type="PANTHER" id="PTHR45527">
    <property type="entry name" value="NONRIBOSOMAL PEPTIDE SYNTHETASE"/>
    <property type="match status" value="1"/>
</dbReference>
<dbReference type="Pfam" id="PF00501">
    <property type="entry name" value="AMP-binding"/>
    <property type="match status" value="1"/>
</dbReference>
<dbReference type="Pfam" id="PF00668">
    <property type="entry name" value="Condensation"/>
    <property type="match status" value="1"/>
</dbReference>
<dbReference type="Pfam" id="PF00550">
    <property type="entry name" value="PP-binding"/>
    <property type="match status" value="1"/>
</dbReference>
<dbReference type="SUPFAM" id="SSF56801">
    <property type="entry name" value="Acetyl-CoA synthetase-like"/>
    <property type="match status" value="1"/>
</dbReference>
<dbReference type="SUPFAM" id="SSF47336">
    <property type="entry name" value="ACP-like"/>
    <property type="match status" value="1"/>
</dbReference>
<dbReference type="SUPFAM" id="SSF52777">
    <property type="entry name" value="CoA-dependent acyltransferases"/>
    <property type="match status" value="1"/>
</dbReference>
<dbReference type="PROSITE" id="PS00455">
    <property type="entry name" value="AMP_BINDING"/>
    <property type="match status" value="1"/>
</dbReference>
<dbReference type="PROSITE" id="PS50075">
    <property type="entry name" value="CARRIER"/>
    <property type="match status" value="1"/>
</dbReference>
<dbReference type="PROSITE" id="PS00012">
    <property type="entry name" value="PHOSPHOPANTETHEINE"/>
    <property type="match status" value="1"/>
</dbReference>
<keyword id="KW-0436">Ligase</keyword>
<keyword id="KW-0596">Phosphopantetheine</keyword>
<keyword id="KW-0597">Phosphoprotein</keyword>
<evidence type="ECO:0000255" key="1"/>
<evidence type="ECO:0000255" key="2">
    <source>
        <dbReference type="PROSITE-ProRule" id="PRU00258"/>
    </source>
</evidence>
<evidence type="ECO:0000269" key="3">
    <source>
    </source>
</evidence>
<evidence type="ECO:0000303" key="4">
    <source>
    </source>
</evidence>
<evidence type="ECO:0000305" key="5"/>
<evidence type="ECO:0000305" key="6">
    <source>
    </source>
</evidence>
<proteinExistence type="evidence at protein level"/>
<reference key="1">
    <citation type="journal article" date="2015" name="Genome Announc.">
        <title>Genome sequence of Aspergillus flavus NRRL 3357, a strain that causes aflatoxin contamination of food and feed.</title>
        <authorList>
            <person name="Nierman W.C."/>
            <person name="Yu J."/>
            <person name="Fedorova-Abrams N.D."/>
            <person name="Losada L."/>
            <person name="Cleveland T.E."/>
            <person name="Bhatnagar D."/>
            <person name="Bennett J.W."/>
            <person name="Dean R."/>
            <person name="Payne G.A."/>
        </authorList>
    </citation>
    <scope>NUCLEOTIDE SEQUENCE [LARGE SCALE GENOMIC DNA]</scope>
    <source>
        <strain>ATCC 200026 / FGSC A1120 / IAM 13836 / NRRL 3357 / JCM 12722 / SRRC 167</strain>
    </source>
</reference>
<reference key="2">
    <citation type="submission" date="2020-07" db="EMBL/GenBank/DDBJ databases">
        <title>Two new chromosome-level Aspergillus flavus reference genomes reveal a large insertion potentially contributing to isolate stress tolerance and aflatoxin production.</title>
        <authorList>
            <person name="Fountain J.C."/>
            <person name="Clevenger J.P."/>
            <person name="Nadon B."/>
            <person name="Youngblood R.C."/>
            <person name="Korani W."/>
            <person name="Chang P.-K."/>
            <person name="Starr D."/>
            <person name="Wang H."/>
            <person name="Isett B."/>
            <person name="Johnston H.R."/>
            <person name="Wiggins R."/>
            <person name="Chu Y."/>
            <person name="Agarwal G."/>
            <person name="Kemerait R.C."/>
            <person name="Pandey M.K."/>
            <person name="Bhatnagar D."/>
            <person name="Ozias-Akins P."/>
            <person name="Varshney R.K."/>
            <person name="Scheffler B.E."/>
            <person name="Vaughn J.N."/>
            <person name="Guo B."/>
        </authorList>
    </citation>
    <scope>NUCLEOTIDE SEQUENCE [LARGE SCALE GENOMIC DNA]</scope>
    <source>
        <strain>ATCC 200026 / FGSC A1120 / IAM 13836 / NRRL 3357 / JCM 12722 / SRRC 167</strain>
    </source>
</reference>
<reference key="3">
    <citation type="journal article" date="2020" name="J. Am. Chem. Soc.">
        <title>Genome mining of alkaloidal terpenoids from a hybrid terpene and nonribosomal peptide biosynthetic pathway.</title>
        <authorList>
            <person name="Yee D.A."/>
            <person name="Kakule T.B."/>
            <person name="Cheng W."/>
            <person name="Chen M."/>
            <person name="Chong C.T.Y."/>
            <person name="Hai Y."/>
            <person name="Hang L.F."/>
            <person name="Hung Y.S."/>
            <person name="Liu N."/>
            <person name="Ohashi M."/>
            <person name="Okorafor I.C."/>
            <person name="Song Y."/>
            <person name="Tang M."/>
            <person name="Zhang Z."/>
            <person name="Tang Y."/>
        </authorList>
    </citation>
    <scope>FUNCTION</scope>
    <scope>DOMAIN</scope>
    <scope>CATALYTIC ACTIVITY</scope>
    <scope>PATHWAY</scope>
</reference>
<organism>
    <name type="scientific">Aspergillus flavus (strain ATCC 200026 / FGSC A1120 / IAM 13836 / NRRL 3357 / JCM 12722 / SRRC 167)</name>
    <dbReference type="NCBI Taxonomy" id="332952"/>
    <lineage>
        <taxon>Eukaryota</taxon>
        <taxon>Fungi</taxon>
        <taxon>Dikarya</taxon>
        <taxon>Ascomycota</taxon>
        <taxon>Pezizomycotina</taxon>
        <taxon>Eurotiomycetes</taxon>
        <taxon>Eurotiomycetidae</taxon>
        <taxon>Eurotiales</taxon>
        <taxon>Aspergillaceae</taxon>
        <taxon>Aspergillus</taxon>
        <taxon>Aspergillus subgen. Circumdati</taxon>
    </lineage>
</organism>
<comment type="function">
    <text evidence="3">Nonribosomal peptide synthetase; part of the gene cluster that mediates the biosynthesis of flavunoidine, an alkaloidal terpenoid with a tetracyclic cage-like core connected to dimethylcadaverine via a C-N bond and acylated with 5,5-dimethyl-L-pipecolate (PubMed:31885262). The tetracyclic core is synthesized by the terpene cyclase flvE and the cytochrome P450 monooxygenase flvD (PubMed:31885262). The terpene cyclase flvE catalyzes the cyclization of farnesyl pyrophosphate (FPP) to form (1R,4R,5S)-(+)-acoradiene and the cytochrome P450 monooxygenase flvD is then responsible for oxidative conversion of (1R,4R,5S)-(+)-acoradiene into the tetracyclic cage present in the final product flavunoidine (PubMed:31885262). In parallel, the N-methyltransferase flvH dimethylates L-lysine to give N,N-dimethyl-L-Lysin which is decarboxylated by flvG to afford dimethylcadaverine (PubMed:31885262). The terpene cyclase-like protein flvF is the enzyme that attaches the dimethylcadaverine precusor at the C-7 of the tetracyclic cage to yield pre-flavunoidine (PubMed:31885262). The cytochrome monooxygenase flvC hydroxylates the C-10 position of pre-flavunoidine whereas the NRPS flvI acylates the terpenoid core at the hydroxylated C-10 with dimethylpipecolate to yield final flavunoidine (PubMed:31885262). The bifunctional enzyme flvA and the dehydrogenase flvB are responsible for the synthesis of the dimethylpipecolate precursor (PubMed:31885262). The PLP-dependent lyase domain of flvA might use L-O-acetyl-homoserine and alpha-keto-isovalerate to form an intermediary ketone that can cyclize intramolecularly to yield an imine (PubMed:31885262). The imine can be reduced by flvB to yield the 6-carboxylated pipecolate (PubMed:31885262). The C-terminal alpha-KG-dependent oxygenase domain of flvA is then proposed to catalyze the decarboxylation to yield dimethylpipecolate (PubMed:31885262).</text>
</comment>
<comment type="catalytic activity">
    <reaction evidence="3">
        <text>(2S)-5,5-dimethylpiperidine-2-carboxylate + 10-hydroxy-pre-flavunoidine + ATP = flavunoidine + AMP + diphosphate + H(+)</text>
        <dbReference type="Rhea" id="RHEA:77007"/>
        <dbReference type="ChEBI" id="CHEBI:15378"/>
        <dbReference type="ChEBI" id="CHEBI:30616"/>
        <dbReference type="ChEBI" id="CHEBI:33019"/>
        <dbReference type="ChEBI" id="CHEBI:194026"/>
        <dbReference type="ChEBI" id="CHEBI:194091"/>
        <dbReference type="ChEBI" id="CHEBI:195495"/>
        <dbReference type="ChEBI" id="CHEBI:456215"/>
    </reaction>
    <physiologicalReaction direction="left-to-right" evidence="3">
        <dbReference type="Rhea" id="RHEA:77008"/>
    </physiologicalReaction>
</comment>
<comment type="pathway">
    <text evidence="3">Secondary metabolite biosynthesis; terpenoid biosynthesis.</text>
</comment>
<comment type="domain">
    <text evidence="6">NRP synthetases are composed of discrete domains (adenylation (A), thiolation (T) or peptidyl carrier protein (PCP) and condensation (C) domains) which when grouped together are referred to as a single module. Each module is responsible for the recognition (via the A domain) and incorporation of a single amino acid into the growing peptide product. FlvI has a monomodular A-T-C architecture.</text>
</comment>
<comment type="similarity">
    <text evidence="5">Belongs to the NRP synthetase family.</text>
</comment>
<feature type="chain" id="PRO_0000454485" description="Nonribosomal peptide synthetase flvI">
    <location>
        <begin position="1"/>
        <end position="1071"/>
    </location>
</feature>
<feature type="domain" description="Carrier" evidence="2">
    <location>
        <begin position="552"/>
        <end position="628"/>
    </location>
</feature>
<feature type="region of interest" description="Adenylation" evidence="1 6">
    <location>
        <begin position="33"/>
        <end position="417"/>
    </location>
</feature>
<feature type="region of interest" description="Condensation" evidence="1 6">
    <location>
        <begin position="689"/>
        <end position="961"/>
    </location>
</feature>
<feature type="modified residue" description="O-(pantetheine 4'-phosphoryl)serine" evidence="2">
    <location>
        <position position="589"/>
    </location>
</feature>
<accession>B8NHE4</accession>
<protein>
    <recommendedName>
        <fullName evidence="4">Nonribosomal peptide synthetase flvI</fullName>
        <ecNumber evidence="3">6.2.1.-</ecNumber>
    </recommendedName>
    <alternativeName>
        <fullName evidence="4">Flavunoidine biosynthesis cluster protein I</fullName>
    </alternativeName>
</protein>